<keyword id="KW-0049">Antioxidant</keyword>
<keyword id="KW-1015">Disulfide bond</keyword>
<keyword id="KW-0560">Oxidoreductase</keyword>
<keyword id="KW-0575">Peroxidase</keyword>
<keyword id="KW-0676">Redox-active center</keyword>
<accession>A1KLC4</accession>
<dbReference type="EC" id="1.11.1.28" evidence="2"/>
<dbReference type="EMBL" id="AM408590">
    <property type="protein sequence ID" value="CAL72436.1"/>
    <property type="molecule type" value="Genomic_DNA"/>
</dbReference>
<dbReference type="RefSeq" id="WP_003412536.1">
    <property type="nucleotide sequence ID" value="NC_008769.1"/>
</dbReference>
<dbReference type="SMR" id="A1KLC4"/>
<dbReference type="PeroxiBase" id="4579">
    <property type="entry name" value="MboAhpD_BCG"/>
</dbReference>
<dbReference type="KEGG" id="mbb:BCG_2448"/>
<dbReference type="HOGENOM" id="CLU_105328_0_0_11"/>
<dbReference type="Proteomes" id="UP000001472">
    <property type="component" value="Chromosome"/>
</dbReference>
<dbReference type="GO" id="GO:0008785">
    <property type="term" value="F:alkyl hydroperoxide reductase activity"/>
    <property type="evidence" value="ECO:0007669"/>
    <property type="project" value="UniProtKB-UniRule"/>
</dbReference>
<dbReference type="GO" id="GO:0015036">
    <property type="term" value="F:disulfide oxidoreductase activity"/>
    <property type="evidence" value="ECO:0007669"/>
    <property type="project" value="TreeGrafter"/>
</dbReference>
<dbReference type="GO" id="GO:0032843">
    <property type="term" value="F:hydroperoxide reductase activity"/>
    <property type="evidence" value="ECO:0007669"/>
    <property type="project" value="InterPro"/>
</dbReference>
<dbReference type="GO" id="GO:0051920">
    <property type="term" value="F:peroxiredoxin activity"/>
    <property type="evidence" value="ECO:0007669"/>
    <property type="project" value="InterPro"/>
</dbReference>
<dbReference type="GO" id="GO:0045454">
    <property type="term" value="P:cell redox homeostasis"/>
    <property type="evidence" value="ECO:0007669"/>
    <property type="project" value="TreeGrafter"/>
</dbReference>
<dbReference type="GO" id="GO:0006979">
    <property type="term" value="P:response to oxidative stress"/>
    <property type="evidence" value="ECO:0007669"/>
    <property type="project" value="InterPro"/>
</dbReference>
<dbReference type="FunFam" id="1.20.1290.10:FF:000004">
    <property type="entry name" value="Alkyl hydroperoxide reductase AhpD"/>
    <property type="match status" value="1"/>
</dbReference>
<dbReference type="Gene3D" id="1.20.1290.10">
    <property type="entry name" value="AhpD-like"/>
    <property type="match status" value="1"/>
</dbReference>
<dbReference type="HAMAP" id="MF_01676">
    <property type="entry name" value="AhpD"/>
    <property type="match status" value="1"/>
</dbReference>
<dbReference type="InterPro" id="IPR004674">
    <property type="entry name" value="AhpD"/>
</dbReference>
<dbReference type="InterPro" id="IPR029032">
    <property type="entry name" value="AhpD-like"/>
</dbReference>
<dbReference type="InterPro" id="IPR004675">
    <property type="entry name" value="AhpD_core"/>
</dbReference>
<dbReference type="InterPro" id="IPR003779">
    <property type="entry name" value="CMD-like"/>
</dbReference>
<dbReference type="NCBIfam" id="TIGR00777">
    <property type="entry name" value="ahpD"/>
    <property type="match status" value="1"/>
</dbReference>
<dbReference type="NCBIfam" id="TIGR00778">
    <property type="entry name" value="ahpD_dom"/>
    <property type="match status" value="1"/>
</dbReference>
<dbReference type="PANTHER" id="PTHR33930">
    <property type="entry name" value="ALKYL HYDROPEROXIDE REDUCTASE AHPD"/>
    <property type="match status" value="1"/>
</dbReference>
<dbReference type="PANTHER" id="PTHR33930:SF7">
    <property type="entry name" value="ALKYL HYDROPEROXIDE REDUCTASE AHPD"/>
    <property type="match status" value="1"/>
</dbReference>
<dbReference type="Pfam" id="PF02627">
    <property type="entry name" value="CMD"/>
    <property type="match status" value="1"/>
</dbReference>
<dbReference type="SUPFAM" id="SSF69118">
    <property type="entry name" value="AhpD-like"/>
    <property type="match status" value="1"/>
</dbReference>
<protein>
    <recommendedName>
        <fullName evidence="2">Alkyl hydroperoxide reductase AhpD</fullName>
        <ecNumber evidence="2">1.11.1.28</ecNumber>
    </recommendedName>
    <alternativeName>
        <fullName evidence="2">Alkylhydroperoxidase AhpD</fullName>
    </alternativeName>
</protein>
<comment type="function">
    <text evidence="2">Antioxidant protein with alkyl hydroperoxidase activity. Required for the reduction of the AhpC active site cysteine residues and for the regeneration of the AhpC enzyme activity.</text>
</comment>
<comment type="catalytic activity">
    <reaction evidence="2">
        <text>N(6)-[(R)-dihydrolipoyl]-L-lysyl-[lipoyl-carrier protein] + a hydroperoxide = N(6)-[(R)-lipoyl]-L-lysyl-[lipoyl-carrier protein] + an alcohol + H2O</text>
        <dbReference type="Rhea" id="RHEA:62636"/>
        <dbReference type="Rhea" id="RHEA-COMP:10502"/>
        <dbReference type="Rhea" id="RHEA-COMP:16355"/>
        <dbReference type="ChEBI" id="CHEBI:15377"/>
        <dbReference type="ChEBI" id="CHEBI:30879"/>
        <dbReference type="ChEBI" id="CHEBI:35924"/>
        <dbReference type="ChEBI" id="CHEBI:83099"/>
        <dbReference type="ChEBI" id="CHEBI:83100"/>
        <dbReference type="EC" id="1.11.1.28"/>
    </reaction>
</comment>
<comment type="subunit">
    <text evidence="2">Homotrimer.</text>
</comment>
<comment type="similarity">
    <text evidence="2">Belongs to the AhpD family.</text>
</comment>
<gene>
    <name evidence="2" type="primary">ahpD</name>
    <name type="ordered locus">BCG_2448</name>
</gene>
<evidence type="ECO:0000250" key="1"/>
<evidence type="ECO:0000255" key="2">
    <source>
        <dbReference type="HAMAP-Rule" id="MF_01676"/>
    </source>
</evidence>
<sequence length="177" mass="18781">MSIEKLKAALPEYAKDIKLNLSSITRSSVLDQEQLWGTLLASAAATRNPQVLADIGAEATDHLSAAARHAALGAAAIMGMNNVFYRGRGFLEGRYDDLRPGLRMNIIANPGIPKANFELWSFAVSAINGCSHCLVAHEHTLRTVGVDREAIFEALKAAAIVSGVAQALATIEALSPS</sequence>
<reference key="1">
    <citation type="journal article" date="2007" name="Proc. Natl. Acad. Sci. U.S.A.">
        <title>Genome plasticity of BCG and impact on vaccine efficacy.</title>
        <authorList>
            <person name="Brosch R."/>
            <person name="Gordon S.V."/>
            <person name="Garnier T."/>
            <person name="Eiglmeier K."/>
            <person name="Frigui W."/>
            <person name="Valenti P."/>
            <person name="Dos Santos S."/>
            <person name="Duthoy S."/>
            <person name="Lacroix C."/>
            <person name="Garcia-Pelayo C."/>
            <person name="Inwald J.K."/>
            <person name="Golby P."/>
            <person name="Garcia J.N."/>
            <person name="Hewinson R.G."/>
            <person name="Behr M.A."/>
            <person name="Quail M.A."/>
            <person name="Churcher C."/>
            <person name="Barrell B.G."/>
            <person name="Parkhill J."/>
            <person name="Cole S.T."/>
        </authorList>
    </citation>
    <scope>NUCLEOTIDE SEQUENCE [LARGE SCALE GENOMIC DNA]</scope>
    <source>
        <strain>BCG / Pasteur 1173P2</strain>
    </source>
</reference>
<feature type="chain" id="PRO_0000359497" description="Alkyl hydroperoxide reductase AhpD">
    <location>
        <begin position="1"/>
        <end position="177"/>
    </location>
</feature>
<feature type="active site" description="Proton donor" evidence="2">
    <location>
        <position position="130"/>
    </location>
</feature>
<feature type="active site" description="Cysteine sulfenic acid (-SOH) intermediate" evidence="2">
    <location>
        <position position="133"/>
    </location>
</feature>
<feature type="disulfide bond" evidence="1">
    <location>
        <begin position="130"/>
        <end position="133"/>
    </location>
</feature>
<feature type="disulfide bond" description="Interchain (with AhpC); in linked form" evidence="2">
    <location>
        <position position="133"/>
    </location>
</feature>
<proteinExistence type="inferred from homology"/>
<name>AHPD_MYCBP</name>
<organism>
    <name type="scientific">Mycobacterium bovis (strain BCG / Pasteur 1173P2)</name>
    <dbReference type="NCBI Taxonomy" id="410289"/>
    <lineage>
        <taxon>Bacteria</taxon>
        <taxon>Bacillati</taxon>
        <taxon>Actinomycetota</taxon>
        <taxon>Actinomycetes</taxon>
        <taxon>Mycobacteriales</taxon>
        <taxon>Mycobacteriaceae</taxon>
        <taxon>Mycobacterium</taxon>
        <taxon>Mycobacterium tuberculosis complex</taxon>
    </lineage>
</organism>